<accession>P43329</accession>
<accession>P76861</accession>
<accession>P76863</accession>
<accession>P77479</accession>
<organism>
    <name type="scientific">Escherichia coli (strain K12)</name>
    <dbReference type="NCBI Taxonomy" id="83333"/>
    <lineage>
        <taxon>Bacteria</taxon>
        <taxon>Pseudomonadati</taxon>
        <taxon>Pseudomonadota</taxon>
        <taxon>Gammaproteobacteria</taxon>
        <taxon>Enterobacterales</taxon>
        <taxon>Enterobacteriaceae</taxon>
        <taxon>Escherichia</taxon>
    </lineage>
</organism>
<feature type="chain" id="PRO_0000055178" description="ATP-dependent RNA helicase HrpA">
    <location>
        <begin position="1"/>
        <end position="1300"/>
    </location>
</feature>
<feature type="domain" description="Helicase ATP-binding" evidence="1">
    <location>
        <begin position="87"/>
        <end position="250"/>
    </location>
</feature>
<feature type="domain" description="Helicase C-terminal" evidence="2">
    <location>
        <begin position="274"/>
        <end position="444"/>
    </location>
</feature>
<feature type="short sequence motif" description="DEAH box">
    <location>
        <begin position="197"/>
        <end position="200"/>
    </location>
</feature>
<feature type="binding site" evidence="1">
    <location>
        <begin position="100"/>
        <end position="107"/>
    </location>
    <ligand>
        <name>ATP</name>
        <dbReference type="ChEBI" id="CHEBI:30616"/>
    </ligand>
</feature>
<feature type="sequence conflict" description="In Ref. 1; BAA07685." evidence="3" ref="1">
    <original>G</original>
    <variation>V</variation>
    <location>
        <position position="152"/>
    </location>
</feature>
<feature type="sequence conflict" description="In Ref. 1; BAA07685." evidence="3" ref="1">
    <original>R</original>
    <variation>H</variation>
    <location>
        <position position="202"/>
    </location>
</feature>
<feature type="sequence conflict" description="In Ref. 1; BAA07685." evidence="3" ref="1">
    <location>
        <position position="301"/>
    </location>
</feature>
<feature type="sequence conflict" description="In Ref. 1; BAA07685." evidence="3" ref="1">
    <original>R</original>
    <variation>P</variation>
    <location>
        <position position="304"/>
    </location>
</feature>
<feature type="sequence conflict" description="In Ref. 1." evidence="3" ref="1">
    <original>GRIAARIDPEWVEP</original>
    <variation>AHCCVSTRNGGA</variation>
    <location>
        <begin position="681"/>
        <end position="694"/>
    </location>
</feature>
<feature type="sequence conflict" description="In Ref. 1; BAA07685." evidence="3" ref="1">
    <original>S</original>
    <variation>T</variation>
    <location>
        <position position="705"/>
    </location>
</feature>
<feature type="sequence conflict" description="In Ref. 1; BAA07685." evidence="3" ref="1">
    <original>AQ</original>
    <variation>E</variation>
    <location>
        <begin position="712"/>
        <end position="713"/>
    </location>
</feature>
<feature type="sequence conflict" description="In Ref. 1; BAA07685." evidence="3" ref="1">
    <original>A</original>
    <variation>P</variation>
    <location>
        <position position="869"/>
    </location>
</feature>
<feature type="helix" evidence="7">
    <location>
        <begin position="9"/>
        <end position="15"/>
    </location>
</feature>
<feature type="helix" evidence="7">
    <location>
        <begin position="16"/>
        <end position="18"/>
    </location>
</feature>
<feature type="helix" evidence="7">
    <location>
        <begin position="21"/>
        <end position="34"/>
    </location>
</feature>
<feature type="helix" evidence="7">
    <location>
        <begin position="40"/>
        <end position="66"/>
    </location>
</feature>
<feature type="helix" evidence="7">
    <location>
        <begin position="78"/>
        <end position="81"/>
    </location>
</feature>
<feature type="helix" evidence="7">
    <location>
        <begin position="83"/>
        <end position="92"/>
    </location>
</feature>
<feature type="strand" evidence="7">
    <location>
        <begin position="94"/>
        <end position="99"/>
    </location>
</feature>
<feature type="helix" evidence="7">
    <location>
        <begin position="106"/>
        <end position="116"/>
    </location>
</feature>
<feature type="turn" evidence="7">
    <location>
        <begin position="117"/>
        <end position="120"/>
    </location>
</feature>
<feature type="strand" evidence="7">
    <location>
        <begin position="121"/>
        <end position="131"/>
    </location>
</feature>
<feature type="helix" evidence="7">
    <location>
        <begin position="132"/>
        <end position="145"/>
    </location>
</feature>
<feature type="strand" evidence="7">
    <location>
        <begin position="152"/>
        <end position="158"/>
    </location>
</feature>
<feature type="strand" evidence="7">
    <location>
        <begin position="161"/>
        <end position="163"/>
    </location>
</feature>
<feature type="strand" evidence="7">
    <location>
        <begin position="170"/>
        <end position="174"/>
    </location>
</feature>
<feature type="helix" evidence="7">
    <location>
        <begin position="175"/>
        <end position="181"/>
    </location>
</feature>
<feature type="turn" evidence="7">
    <location>
        <begin position="182"/>
        <end position="184"/>
    </location>
</feature>
<feature type="strand" evidence="7">
    <location>
        <begin position="191"/>
        <end position="196"/>
    </location>
</feature>
<feature type="helix" evidence="7">
    <location>
        <begin position="199"/>
        <end position="201"/>
    </location>
</feature>
<feature type="helix" evidence="7">
    <location>
        <begin position="204"/>
        <end position="216"/>
    </location>
</feature>
<feature type="helix" evidence="7">
    <location>
        <begin position="217"/>
        <end position="219"/>
    </location>
</feature>
<feature type="strand" evidence="7">
    <location>
        <begin position="224"/>
        <end position="229"/>
    </location>
</feature>
<feature type="strand" evidence="7">
    <location>
        <begin position="231"/>
        <end position="233"/>
    </location>
</feature>
<feature type="helix" evidence="7">
    <location>
        <begin position="234"/>
        <end position="240"/>
    </location>
</feature>
<feature type="strand" evidence="5">
    <location>
        <begin position="241"/>
        <end position="243"/>
    </location>
</feature>
<feature type="strand" evidence="7">
    <location>
        <begin position="246"/>
        <end position="248"/>
    </location>
</feature>
<feature type="strand" evidence="7">
    <location>
        <begin position="257"/>
        <end position="260"/>
    </location>
</feature>
<feature type="helix" evidence="7">
    <location>
        <begin position="271"/>
        <end position="286"/>
    </location>
</feature>
<feature type="strand" evidence="7">
    <location>
        <begin position="288"/>
        <end position="290"/>
    </location>
</feature>
<feature type="strand" evidence="7">
    <location>
        <begin position="292"/>
        <end position="296"/>
    </location>
</feature>
<feature type="helix" evidence="7">
    <location>
        <begin position="300"/>
        <end position="312"/>
    </location>
</feature>
<feature type="strand" evidence="7">
    <location>
        <begin position="318"/>
        <end position="322"/>
    </location>
</feature>
<feature type="strand" evidence="5">
    <location>
        <begin position="325"/>
        <end position="327"/>
    </location>
</feature>
<feature type="turn" evidence="7">
    <location>
        <begin position="329"/>
        <end position="331"/>
    </location>
</feature>
<feature type="helix" evidence="7">
    <location>
        <begin position="333"/>
        <end position="336"/>
    </location>
</feature>
<feature type="strand" evidence="7">
    <location>
        <begin position="340"/>
        <end position="347"/>
    </location>
</feature>
<feature type="helix" evidence="7">
    <location>
        <begin position="350"/>
        <end position="353"/>
    </location>
</feature>
<feature type="strand" evidence="7">
    <location>
        <begin position="360"/>
        <end position="365"/>
    </location>
</feature>
<feature type="strand" evidence="7">
    <location>
        <begin position="368"/>
        <end position="370"/>
    </location>
</feature>
<feature type="strand" evidence="7">
    <location>
        <begin position="373"/>
        <end position="375"/>
    </location>
</feature>
<feature type="helix" evidence="7">
    <location>
        <begin position="377"/>
        <end position="379"/>
    </location>
</feature>
<feature type="strand" evidence="7">
    <location>
        <begin position="380"/>
        <end position="382"/>
    </location>
</feature>
<feature type="strand" evidence="7">
    <location>
        <begin position="385"/>
        <end position="387"/>
    </location>
</feature>
<feature type="helix" evidence="7">
    <location>
        <begin position="390"/>
        <end position="398"/>
    </location>
</feature>
<feature type="strand" evidence="6">
    <location>
        <begin position="401"/>
        <end position="405"/>
    </location>
</feature>
<feature type="strand" evidence="7">
    <location>
        <begin position="407"/>
        <end position="412"/>
    </location>
</feature>
<feature type="helix" evidence="7">
    <location>
        <begin position="414"/>
        <end position="419"/>
    </location>
</feature>
<feature type="helix" evidence="7">
    <location>
        <begin position="427"/>
        <end position="429"/>
    </location>
</feature>
<feature type="helix" evidence="7">
    <location>
        <begin position="433"/>
        <end position="443"/>
    </location>
</feature>
<feature type="turn" evidence="7">
    <location>
        <begin position="448"/>
        <end position="450"/>
    </location>
</feature>
<feature type="helix" evidence="7">
    <location>
        <begin position="459"/>
        <end position="461"/>
    </location>
</feature>
<feature type="helix" evidence="7">
    <location>
        <begin position="462"/>
        <end position="471"/>
    </location>
</feature>
<feature type="strand" evidence="4">
    <location>
        <begin position="475"/>
        <end position="479"/>
    </location>
</feature>
<feature type="strand" evidence="4">
    <location>
        <begin position="484"/>
        <end position="486"/>
    </location>
</feature>
<feature type="helix" evidence="7">
    <location>
        <begin position="488"/>
        <end position="494"/>
    </location>
</feature>
<feature type="strand" evidence="5">
    <location>
        <begin position="496"/>
        <end position="498"/>
    </location>
</feature>
<feature type="helix" evidence="7">
    <location>
        <begin position="500"/>
        <end position="510"/>
    </location>
</feature>
<feature type="turn" evidence="7">
    <location>
        <begin position="511"/>
        <end position="513"/>
    </location>
</feature>
<feature type="helix" evidence="7">
    <location>
        <begin position="515"/>
        <end position="525"/>
    </location>
</feature>
<feature type="turn" evidence="7">
    <location>
        <begin position="535"/>
        <end position="537"/>
    </location>
</feature>
<feature type="helix" evidence="7">
    <location>
        <begin position="540"/>
        <end position="545"/>
    </location>
</feature>
<feature type="helix" evidence="7">
    <location>
        <begin position="546"/>
        <end position="548"/>
    </location>
</feature>
<feature type="helix" evidence="7">
    <location>
        <begin position="554"/>
        <end position="571"/>
    </location>
</feature>
<feature type="helix" evidence="7">
    <location>
        <begin position="578"/>
        <end position="583"/>
    </location>
</feature>
<feature type="helix" evidence="7">
    <location>
        <begin position="588"/>
        <end position="607"/>
    </location>
</feature>
<feature type="turn" evidence="7">
    <location>
        <begin position="619"/>
        <end position="625"/>
    </location>
</feature>
<feature type="helix" evidence="5">
    <location>
        <begin position="631"/>
        <end position="633"/>
    </location>
</feature>
<feature type="strand" evidence="6">
    <location>
        <begin position="634"/>
        <end position="637"/>
    </location>
</feature>
<feature type="strand" evidence="5">
    <location>
        <begin position="644"/>
        <end position="646"/>
    </location>
</feature>
<feature type="helix" evidence="6">
    <location>
        <begin position="647"/>
        <end position="649"/>
    </location>
</feature>
<feature type="strand" evidence="6">
    <location>
        <begin position="651"/>
        <end position="654"/>
    </location>
</feature>
<feature type="strand" evidence="6">
    <location>
        <begin position="661"/>
        <end position="663"/>
    </location>
</feature>
<feature type="strand" evidence="6">
    <location>
        <begin position="666"/>
        <end position="686"/>
    </location>
</feature>
<feature type="helix" evidence="6">
    <location>
        <begin position="689"/>
        <end position="691"/>
    </location>
</feature>
<feature type="helix" evidence="6">
    <location>
        <begin position="693"/>
        <end position="695"/>
    </location>
</feature>
<feature type="turn" evidence="6">
    <location>
        <begin position="697"/>
        <end position="699"/>
    </location>
</feature>
<feature type="strand" evidence="6">
    <location>
        <begin position="701"/>
        <end position="710"/>
    </location>
</feature>
<feature type="turn" evidence="6">
    <location>
        <begin position="711"/>
        <end position="714"/>
    </location>
</feature>
<feature type="strand" evidence="6">
    <location>
        <begin position="715"/>
        <end position="724"/>
    </location>
</feature>
<feature type="strand" evidence="6">
    <location>
        <begin position="727"/>
        <end position="734"/>
    </location>
</feature>
<feature type="helix" evidence="6">
    <location>
        <begin position="737"/>
        <end position="740"/>
    </location>
</feature>
<feature type="helix" evidence="6">
    <location>
        <begin position="743"/>
        <end position="749"/>
    </location>
</feature>
<protein>
    <recommendedName>
        <fullName>ATP-dependent RNA helicase HrpA</fullName>
        <ecNumber>3.6.4.13</ecNumber>
    </recommendedName>
</protein>
<name>HRPA_ECOLI</name>
<sequence length="1300" mass="149028">MTEQQKLTFTALQQRLDSLMLRDRLRFSRRLHGVKKVKNPDAQQAIFQEMAKEIDQAAGKVLLREAARPEITYPDNLPVSQKKQDILEAIRDHQVVIVAGETGSGKTTQLPKICMELGRGIKGLIGHTQPRRLAARTVANRIAEELKTEPGGCIGYKVRFSDHVSDNTMVKLMTDGILLAEIQQDRLLMQYDTIIIDEAHERSLNIDFLLGYLKELLPRRPDLKIIITSATIDPERFSRHFNNAPIIEVSGRTYPVEVRYRPIVEEADDTERDQLQAIFDAVDELSQESHGDILIFMSGEREIRDTADALNKLNLRHTEILPLYARLSNSEQNRVFQSHSGRRIVLATNVAETSLTVPGIKYVIDPGTARISRYSYRTKVQRLPIEPISQASANQRKGRCGRVSEGICIRLYSEDDFLSRPEFTDPEILRTNLASVILQMTALGLGDIAAFPFVEAPDKRNIQDGVRLLEELGAITTDEQASAYKLTPLGRQLSQLPVDPRLARMVLEAQKHGCVREAMIITSALSIQDPRERPMDKQQASDEKHRRFHDKESDFLAFVNLWNYLGEQQKALSSNAFRRLCRTDYLNYLRVREWQDIYTQLRQVVKELGIPVNSEPAEYREIHIALLTGLLSHIGMKDADKQEYTGARNARFSIFPGSGLFKKPPKWVMVAELVETSRLWGRIAARIDPEWVEPVAQHLIKRTYSEPHWERAQGAVMATEKVTVYGLPIVAARKVNYSQIDPALCRELFIRHALVEGDWQTRHAFFRENLKLRAEVEELEHKSRRRDILVDDETLFEFYDQRISHDVISARHFDSWWKKVSRETPDLLNFEKSMLIKEGAEKISKLDYPNFWHQGNLKLRLSYQFEPGADADGVTVHIPLPLLNQVEESGFEWQIPGLRRELVIALIKSLPKPVRRNFVPAPNYAEAFLGRVKPLELPLLDSLERELRRMTGVTVDREDWHWDQVPDHLKITFRVVDDKNKKLKEGRSLQDLKDALKGKVQETLSAVADDGIEQSGLHIWSFGQLPESYEQKRGNYKVKAWPALVDERDSVAIKLFDNPLEQKQAMWNGLRRLLLLNIPSPIKYLHEKLPNKAKLGLYFNPYGKVLELIDDCISCGVDKLIDANGGPVWTEEGFAALHEKVRAELNDTVVDIAKQVEQILTAVFNINKRLKGRVDMTMALGLSDIKAQMGGLVYRGFVTGNGFKRLGDTLRYLQAIEKRLEKLAVDPHRDRAQMLKVENVQQAWQQWINKLPPARREDEDVKEIRWMIEELRVSYFAQQLGTPYPISDKRILQAMEQISG</sequence>
<gene>
    <name type="primary">hrpA</name>
    <name type="ordered locus">b1413</name>
    <name type="ordered locus">JW5905</name>
</gene>
<dbReference type="EC" id="3.6.4.13"/>
<dbReference type="EMBL" id="D42105">
    <property type="protein sequence ID" value="BAA07685.1"/>
    <property type="status" value="ALT_INIT"/>
    <property type="molecule type" value="Genomic_DNA"/>
</dbReference>
<dbReference type="EMBL" id="U00096">
    <property type="protein sequence ID" value="AAC74495.2"/>
    <property type="molecule type" value="Genomic_DNA"/>
</dbReference>
<dbReference type="EMBL" id="AP009048">
    <property type="protein sequence ID" value="BAA15029.1"/>
    <property type="status" value="ALT_INIT"/>
    <property type="molecule type" value="Genomic_DNA"/>
</dbReference>
<dbReference type="PIR" id="H64892">
    <property type="entry name" value="H64892"/>
</dbReference>
<dbReference type="RefSeq" id="NP_415931.4">
    <property type="nucleotide sequence ID" value="NC_000913.3"/>
</dbReference>
<dbReference type="RefSeq" id="WP_000139543.1">
    <property type="nucleotide sequence ID" value="NZ_SSZK01000021.1"/>
</dbReference>
<dbReference type="PDB" id="6ZWW">
    <property type="method" value="X-ray"/>
    <property type="resolution" value="3.16 A"/>
    <property type="chains" value="A/C/E/G=1-783"/>
</dbReference>
<dbReference type="PDB" id="6ZWX">
    <property type="method" value="X-ray"/>
    <property type="resolution" value="2.70 A"/>
    <property type="chains" value="A=1-756"/>
</dbReference>
<dbReference type="PDB" id="7AKP">
    <property type="method" value="X-ray"/>
    <property type="resolution" value="2.59 A"/>
    <property type="chains" value="A=1-783"/>
</dbReference>
<dbReference type="PDB" id="8PO6">
    <property type="method" value="X-ray"/>
    <property type="resolution" value="2.66 A"/>
    <property type="chains" value="A=1-758"/>
</dbReference>
<dbReference type="PDB" id="8PO7">
    <property type="method" value="X-ray"/>
    <property type="resolution" value="2.26 A"/>
    <property type="chains" value="A/B=1-758"/>
</dbReference>
<dbReference type="PDB" id="8PO8">
    <property type="method" value="X-ray"/>
    <property type="resolution" value="2.52 A"/>
    <property type="chains" value="A/B=1-758"/>
</dbReference>
<dbReference type="PDB" id="9GFT">
    <property type="method" value="EM"/>
    <property type="resolution" value="3.10 A"/>
    <property type="chains" value="B=2-1300"/>
</dbReference>
<dbReference type="PDBsum" id="6ZWW"/>
<dbReference type="PDBsum" id="6ZWX"/>
<dbReference type="PDBsum" id="7AKP"/>
<dbReference type="PDBsum" id="8PO6"/>
<dbReference type="PDBsum" id="8PO7"/>
<dbReference type="PDBsum" id="8PO8"/>
<dbReference type="PDBsum" id="9GFT"/>
<dbReference type="EMDB" id="EMD-51318"/>
<dbReference type="EMDB" id="EMD-51340"/>
<dbReference type="SMR" id="P43329"/>
<dbReference type="BioGRID" id="4261507">
    <property type="interactions" value="150"/>
</dbReference>
<dbReference type="DIP" id="DIP-9937N"/>
<dbReference type="FunCoup" id="P43329">
    <property type="interactions" value="473"/>
</dbReference>
<dbReference type="IntAct" id="P43329">
    <property type="interactions" value="26"/>
</dbReference>
<dbReference type="STRING" id="511145.b1413"/>
<dbReference type="jPOST" id="P43329"/>
<dbReference type="PaxDb" id="511145-b1413"/>
<dbReference type="EnsemblBacteria" id="AAC74495">
    <property type="protein sequence ID" value="AAC74495"/>
    <property type="gene ID" value="b1413"/>
</dbReference>
<dbReference type="GeneID" id="948444"/>
<dbReference type="KEGG" id="ecj:JW5905"/>
<dbReference type="KEGG" id="eco:b1413"/>
<dbReference type="KEGG" id="ecoc:C3026_08230"/>
<dbReference type="PATRIC" id="fig|1411691.4.peg.858"/>
<dbReference type="EchoBASE" id="EB2772"/>
<dbReference type="eggNOG" id="COG1643">
    <property type="taxonomic scope" value="Bacteria"/>
</dbReference>
<dbReference type="HOGENOM" id="CLU_001832_3_3_6"/>
<dbReference type="InParanoid" id="P43329"/>
<dbReference type="OMA" id="YERVTLY"/>
<dbReference type="OrthoDB" id="9805617at2"/>
<dbReference type="PhylomeDB" id="P43329"/>
<dbReference type="BioCyc" id="EcoCyc:G6732-MONOMER"/>
<dbReference type="BioCyc" id="MetaCyc:G6732-MONOMER"/>
<dbReference type="PRO" id="PR:P43329"/>
<dbReference type="Proteomes" id="UP000000625">
    <property type="component" value="Chromosome"/>
</dbReference>
<dbReference type="GO" id="GO:0034458">
    <property type="term" value="F:3'-5' RNA helicase activity"/>
    <property type="evidence" value="ECO:0000314"/>
    <property type="project" value="EcoCyc"/>
</dbReference>
<dbReference type="GO" id="GO:0005524">
    <property type="term" value="F:ATP binding"/>
    <property type="evidence" value="ECO:0007669"/>
    <property type="project" value="UniProtKB-KW"/>
</dbReference>
<dbReference type="GO" id="GO:0016887">
    <property type="term" value="F:ATP hydrolysis activity"/>
    <property type="evidence" value="ECO:0007669"/>
    <property type="project" value="InterPro"/>
</dbReference>
<dbReference type="GO" id="GO:0004386">
    <property type="term" value="F:helicase activity"/>
    <property type="evidence" value="ECO:0000315"/>
    <property type="project" value="EcoliWiki"/>
</dbReference>
<dbReference type="GO" id="GO:0003723">
    <property type="term" value="F:RNA binding"/>
    <property type="evidence" value="ECO:0000318"/>
    <property type="project" value="GO_Central"/>
</dbReference>
<dbReference type="GO" id="GO:0003724">
    <property type="term" value="F:RNA helicase activity"/>
    <property type="evidence" value="ECO:0000250"/>
    <property type="project" value="EcoCyc"/>
</dbReference>
<dbReference type="GO" id="GO:0009451">
    <property type="term" value="P:RNA modification"/>
    <property type="evidence" value="ECO:0000315"/>
    <property type="project" value="EcoliWiki"/>
</dbReference>
<dbReference type="CDD" id="cd17989">
    <property type="entry name" value="DEXHc_HrpA"/>
    <property type="match status" value="1"/>
</dbReference>
<dbReference type="CDD" id="cd18791">
    <property type="entry name" value="SF2_C_RHA"/>
    <property type="match status" value="1"/>
</dbReference>
<dbReference type="FunFam" id="1.20.120.1080:FF:000005">
    <property type="entry name" value="ATP-dependent helicase HrpA"/>
    <property type="match status" value="1"/>
</dbReference>
<dbReference type="FunFam" id="3.40.50.300:FF:000575">
    <property type="entry name" value="ATP-dependent helicase hrpA"/>
    <property type="match status" value="1"/>
</dbReference>
<dbReference type="FunFam" id="3.40.50.300:FF:000439">
    <property type="entry name" value="ATP-dependent RNA helicase HrpA"/>
    <property type="match status" value="1"/>
</dbReference>
<dbReference type="Gene3D" id="1.20.120.1080">
    <property type="match status" value="1"/>
</dbReference>
<dbReference type="Gene3D" id="3.40.50.300">
    <property type="entry name" value="P-loop containing nucleotide triphosphate hydrolases"/>
    <property type="match status" value="2"/>
</dbReference>
<dbReference type="InterPro" id="IPR003593">
    <property type="entry name" value="AAA+_ATPase"/>
</dbReference>
<dbReference type="InterPro" id="IPR011709">
    <property type="entry name" value="DEAD-box_helicase_OB_fold"/>
</dbReference>
<dbReference type="InterPro" id="IPR011545">
    <property type="entry name" value="DEAD/DEAH_box_helicase_dom"/>
</dbReference>
<dbReference type="InterPro" id="IPR048333">
    <property type="entry name" value="HA2_WH"/>
</dbReference>
<dbReference type="InterPro" id="IPR007502">
    <property type="entry name" value="Helicase-assoc_dom"/>
</dbReference>
<dbReference type="InterPro" id="IPR014001">
    <property type="entry name" value="Helicase_ATP-bd"/>
</dbReference>
<dbReference type="InterPro" id="IPR001650">
    <property type="entry name" value="Helicase_C-like"/>
</dbReference>
<dbReference type="InterPro" id="IPR024590">
    <property type="entry name" value="HrpA_C"/>
</dbReference>
<dbReference type="InterPro" id="IPR027417">
    <property type="entry name" value="P-loop_NTPase"/>
</dbReference>
<dbReference type="InterPro" id="IPR010222">
    <property type="entry name" value="RNA_helicase_HrpA"/>
</dbReference>
<dbReference type="NCBIfam" id="TIGR01967">
    <property type="entry name" value="DEAH_box_HrpA"/>
    <property type="match status" value="1"/>
</dbReference>
<dbReference type="NCBIfam" id="NF008348">
    <property type="entry name" value="PRK11131.1"/>
    <property type="match status" value="1"/>
</dbReference>
<dbReference type="PANTHER" id="PTHR18934">
    <property type="entry name" value="ATP-DEPENDENT RNA HELICASE"/>
    <property type="match status" value="1"/>
</dbReference>
<dbReference type="PANTHER" id="PTHR18934:SF99">
    <property type="entry name" value="ATP-DEPENDENT RNA HELICASE DHX37-RELATED"/>
    <property type="match status" value="1"/>
</dbReference>
<dbReference type="Pfam" id="PF00270">
    <property type="entry name" value="DEAD"/>
    <property type="match status" value="1"/>
</dbReference>
<dbReference type="Pfam" id="PF11898">
    <property type="entry name" value="DUF3418"/>
    <property type="match status" value="1"/>
</dbReference>
<dbReference type="Pfam" id="PF21010">
    <property type="entry name" value="HA2_C"/>
    <property type="match status" value="1"/>
</dbReference>
<dbReference type="Pfam" id="PF04408">
    <property type="entry name" value="HA2_N"/>
    <property type="match status" value="1"/>
</dbReference>
<dbReference type="Pfam" id="PF00271">
    <property type="entry name" value="Helicase_C"/>
    <property type="match status" value="1"/>
</dbReference>
<dbReference type="Pfam" id="PF07717">
    <property type="entry name" value="OB_NTP_bind"/>
    <property type="match status" value="1"/>
</dbReference>
<dbReference type="SMART" id="SM00382">
    <property type="entry name" value="AAA"/>
    <property type="match status" value="1"/>
</dbReference>
<dbReference type="SMART" id="SM00487">
    <property type="entry name" value="DEXDc"/>
    <property type="match status" value="1"/>
</dbReference>
<dbReference type="SMART" id="SM00847">
    <property type="entry name" value="HA2"/>
    <property type="match status" value="1"/>
</dbReference>
<dbReference type="SMART" id="SM00490">
    <property type="entry name" value="HELICc"/>
    <property type="match status" value="1"/>
</dbReference>
<dbReference type="SUPFAM" id="SSF52540">
    <property type="entry name" value="P-loop containing nucleoside triphosphate hydrolases"/>
    <property type="match status" value="1"/>
</dbReference>
<dbReference type="PROSITE" id="PS51192">
    <property type="entry name" value="HELICASE_ATP_BIND_1"/>
    <property type="match status" value="1"/>
</dbReference>
<dbReference type="PROSITE" id="PS51194">
    <property type="entry name" value="HELICASE_CTER"/>
    <property type="match status" value="1"/>
</dbReference>
<evidence type="ECO:0000255" key="1">
    <source>
        <dbReference type="PROSITE-ProRule" id="PRU00541"/>
    </source>
</evidence>
<evidence type="ECO:0000255" key="2">
    <source>
        <dbReference type="PROSITE-ProRule" id="PRU00542"/>
    </source>
</evidence>
<evidence type="ECO:0000305" key="3"/>
<evidence type="ECO:0007829" key="4">
    <source>
        <dbReference type="PDB" id="6ZWW"/>
    </source>
</evidence>
<evidence type="ECO:0007829" key="5">
    <source>
        <dbReference type="PDB" id="6ZWX"/>
    </source>
</evidence>
<evidence type="ECO:0007829" key="6">
    <source>
        <dbReference type="PDB" id="7AKP"/>
    </source>
</evidence>
<evidence type="ECO:0007829" key="7">
    <source>
        <dbReference type="PDB" id="8PO7"/>
    </source>
</evidence>
<keyword id="KW-0002">3D-structure</keyword>
<keyword id="KW-0067">ATP-binding</keyword>
<keyword id="KW-0347">Helicase</keyword>
<keyword id="KW-0378">Hydrolase</keyword>
<keyword id="KW-0547">Nucleotide-binding</keyword>
<keyword id="KW-1185">Reference proteome</keyword>
<comment type="function">
    <text>Not yet known.</text>
</comment>
<comment type="catalytic activity">
    <reaction>
        <text>ATP + H2O = ADP + phosphate + H(+)</text>
        <dbReference type="Rhea" id="RHEA:13065"/>
        <dbReference type="ChEBI" id="CHEBI:15377"/>
        <dbReference type="ChEBI" id="CHEBI:15378"/>
        <dbReference type="ChEBI" id="CHEBI:30616"/>
        <dbReference type="ChEBI" id="CHEBI:43474"/>
        <dbReference type="ChEBI" id="CHEBI:456216"/>
        <dbReference type="EC" id="3.6.4.13"/>
    </reaction>
</comment>
<comment type="similarity">
    <text evidence="3">Belongs to the DEAD box helicase family. DEAH subfamily.</text>
</comment>
<comment type="sequence caution" evidence="3">
    <conflict type="erroneous initiation">
        <sequence resource="EMBL-CDS" id="BAA07685"/>
    </conflict>
</comment>
<comment type="sequence caution" evidence="3">
    <conflict type="erroneous initiation">
        <sequence resource="EMBL-CDS" id="BAA15029"/>
    </conflict>
</comment>
<proteinExistence type="evidence at protein level"/>
<reference key="1">
    <citation type="journal article" date="1995" name="Nucleic Acids Res.">
        <title>Cloning and characterization of the hrpA gene in the terC region of Escherichia coli that is highly similar to the DEAH family RNA helicase genes of Saccharomyces cerevisiae.</title>
        <authorList>
            <person name="Moriya H."/>
            <person name="Kasai H."/>
            <person name="Isono K."/>
        </authorList>
    </citation>
    <scope>NUCLEOTIDE SEQUENCE [GENOMIC DNA]</scope>
    <source>
        <strain>K12</strain>
    </source>
</reference>
<reference key="2">
    <citation type="journal article" date="1996" name="DNA Res.">
        <title>A 570-kb DNA sequence of the Escherichia coli K-12 genome corresponding to the 28.0-40.1 min region on the linkage map.</title>
        <authorList>
            <person name="Aiba H."/>
            <person name="Baba T."/>
            <person name="Fujita K."/>
            <person name="Hayashi K."/>
            <person name="Inada T."/>
            <person name="Isono K."/>
            <person name="Itoh T."/>
            <person name="Kasai H."/>
            <person name="Kashimoto K."/>
            <person name="Kimura S."/>
            <person name="Kitakawa M."/>
            <person name="Kitagawa M."/>
            <person name="Makino K."/>
            <person name="Miki T."/>
            <person name="Mizobuchi K."/>
            <person name="Mori H."/>
            <person name="Mori T."/>
            <person name="Motomura K."/>
            <person name="Nakade S."/>
            <person name="Nakamura Y."/>
            <person name="Nashimoto H."/>
            <person name="Nishio Y."/>
            <person name="Oshima T."/>
            <person name="Saito N."/>
            <person name="Sampei G."/>
            <person name="Seki Y."/>
            <person name="Sivasundaram S."/>
            <person name="Tagami H."/>
            <person name="Takeda J."/>
            <person name="Takemoto K."/>
            <person name="Takeuchi Y."/>
            <person name="Wada C."/>
            <person name="Yamamoto Y."/>
            <person name="Horiuchi T."/>
        </authorList>
    </citation>
    <scope>NUCLEOTIDE SEQUENCE [LARGE SCALE GENOMIC DNA]</scope>
    <source>
        <strain>K12 / W3110 / ATCC 27325 / DSM 5911</strain>
    </source>
</reference>
<reference key="3">
    <citation type="journal article" date="1997" name="Science">
        <title>The complete genome sequence of Escherichia coli K-12.</title>
        <authorList>
            <person name="Blattner F.R."/>
            <person name="Plunkett G. III"/>
            <person name="Bloch C.A."/>
            <person name="Perna N.T."/>
            <person name="Burland V."/>
            <person name="Riley M."/>
            <person name="Collado-Vides J."/>
            <person name="Glasner J.D."/>
            <person name="Rode C.K."/>
            <person name="Mayhew G.F."/>
            <person name="Gregor J."/>
            <person name="Davis N.W."/>
            <person name="Kirkpatrick H.A."/>
            <person name="Goeden M.A."/>
            <person name="Rose D.J."/>
            <person name="Mau B."/>
            <person name="Shao Y."/>
        </authorList>
    </citation>
    <scope>NUCLEOTIDE SEQUENCE [LARGE SCALE GENOMIC DNA]</scope>
    <source>
        <strain>K12 / MG1655 / ATCC 47076</strain>
    </source>
</reference>
<reference key="4">
    <citation type="journal article" date="2006" name="Mol. Syst. Biol.">
        <title>Highly accurate genome sequences of Escherichia coli K-12 strains MG1655 and W3110.</title>
        <authorList>
            <person name="Hayashi K."/>
            <person name="Morooka N."/>
            <person name="Yamamoto Y."/>
            <person name="Fujita K."/>
            <person name="Isono K."/>
            <person name="Choi S."/>
            <person name="Ohtsubo E."/>
            <person name="Baba T."/>
            <person name="Wanner B.L."/>
            <person name="Mori H."/>
            <person name="Horiuchi T."/>
        </authorList>
    </citation>
    <scope>NUCLEOTIDE SEQUENCE [LARGE SCALE GENOMIC DNA]</scope>
    <source>
        <strain>K12 / W3110 / ATCC 27325 / DSM 5911</strain>
    </source>
</reference>